<evidence type="ECO:0000255" key="1">
    <source>
        <dbReference type="HAMAP-Rule" id="MF_03102"/>
    </source>
</evidence>
<reference key="1">
    <citation type="journal article" date="2015" name="PLoS Genet.">
        <title>The dynamic genome and transcriptome of the human fungal pathogen Blastomyces and close relative Emmonsia.</title>
        <authorList>
            <person name="Munoz J.F."/>
            <person name="Gauthier G.M."/>
            <person name="Desjardins C.A."/>
            <person name="Gallo J.E."/>
            <person name="Holder J."/>
            <person name="Sullivan T.D."/>
            <person name="Marty A.J."/>
            <person name="Carmen J.C."/>
            <person name="Chen Z."/>
            <person name="Ding L."/>
            <person name="Gujja S."/>
            <person name="Magrini V."/>
            <person name="Misas E."/>
            <person name="Mitreva M."/>
            <person name="Priest M."/>
            <person name="Saif S."/>
            <person name="Whiston E.A."/>
            <person name="Young S."/>
            <person name="Zeng Q."/>
            <person name="Goldman W.E."/>
            <person name="Mardis E.R."/>
            <person name="Taylor J.W."/>
            <person name="McEwen J.G."/>
            <person name="Clay O.K."/>
            <person name="Klein B.S."/>
            <person name="Cuomo C.A."/>
        </authorList>
    </citation>
    <scope>NUCLEOTIDE SEQUENCE [LARGE SCALE GENOMIC DNA]</scope>
    <source>
        <strain>SLH14081</strain>
    </source>
</reference>
<comment type="function">
    <text evidence="1">Component of the ERMES/MDM complex, which serves as a molecular tether to connect the endoplasmic reticulum and mitochondria. Components of this complex are involved in the control of mitochondrial shape and protein biogenesis and may function in phospholipid exchange. MDM10 is involved in the late assembly steps of the general translocase of the mitochondrial outer membrane (TOM complex). Functions in the TOM40-specific route of the assembly of outer membrane beta-barrel proteins, including the association of TOM40 with the receptor TOM22 and small TOM proteins. Can associate with the SAM(core) complex as well as the MDM12-MMM1 complex, both involved in late steps of the major beta-barrel assembly pathway, that is responsible for biogenesis of all outer membrane beta-barrel proteins. May act as a switch that shuttles between both complexes and channels precursor proteins into the TOM40-specific pathway. Plays a role in mitochondrial morphology and in the inheritance of mitochondria.</text>
</comment>
<comment type="subunit">
    <text evidence="1">Component of the ER-mitochondria encounter structure (ERMES) or MDM complex, composed of MMM1, MDM10, MDM12 and MDM34. Associates with the mitochondrial outer membrane sorting assembly machinery SAM(core) complex.</text>
</comment>
<comment type="subcellular location">
    <subcellularLocation>
        <location evidence="1">Mitochondrion outer membrane</location>
        <topology evidence="1">Multi-pass membrane protein</topology>
    </subcellularLocation>
    <text evidence="1">The ERMES/MDM complex localizes to a few discrete foci (around 10 per single cell), that represent mitochondria-endoplasmic reticulum junctions. These foci are often found next to mtDNA nucleoids.</text>
</comment>
<comment type="domain">
    <text>Lacks alpha-helical transmembrane segments, suggesting that it resides in the membrane via beta-sheet conformations similar to those predicted for other outer membrane proteins and porin.</text>
</comment>
<comment type="similarity">
    <text evidence="1">Belongs to the MDM10 family.</text>
</comment>
<organism>
    <name type="scientific">Blastomyces gilchristii (strain SLH14081)</name>
    <name type="common">Blastomyces dermatitidis</name>
    <dbReference type="NCBI Taxonomy" id="559298"/>
    <lineage>
        <taxon>Eukaryota</taxon>
        <taxon>Fungi</taxon>
        <taxon>Dikarya</taxon>
        <taxon>Ascomycota</taxon>
        <taxon>Pezizomycotina</taxon>
        <taxon>Eurotiomycetes</taxon>
        <taxon>Eurotiomycetidae</taxon>
        <taxon>Onygenales</taxon>
        <taxon>Ajellomycetaceae</taxon>
        <taxon>Blastomyces</taxon>
    </lineage>
</organism>
<feature type="chain" id="PRO_0000384159" description="Mitochondrial distribution and morphology protein 10">
    <location>
        <begin position="1"/>
        <end position="468"/>
    </location>
</feature>
<sequence>MRDFMDYIQLAFYDASKWNRDNSYSQLTTTANALLDFSTPERLKVNLSSLSTPHFATTYTLGTVGLIDGSISYLFTTIPLHDTPSRSTLIPLRKLVPGYRQIYPPSLPPAFPAADGRDGDLAIGGTEGDLKKKATLLHATLHLPPPTTLTGSFLRRLSPTTQLSLAFCSSRAPASKSAPQATLVTQILYDTGKYNSEFLFSTDNALFGFKGLWNFGPDPRKQNQNGGDPAREPCRSLLSLLSAGGEVYYSPVSSVVGLSTGLRFTTLPAATENPHSTFPYTLTLTLTPLTGSMSTTYSLLASPNLAFSSRFGFNVYSWESEMVAGCELWRRSKKLHTLQRNSSPLFAVDDLTWARRKMGLQDAAVSVHSERDDLPGIQRYDHDMHHHTQRPHASDSVIKVRVDQSWNIRALWEGRVKELVVSAGIALGPKSRSSLSYASSLAASGPGAAGGLSSYGWKSVGVSVLYSS</sequence>
<gene>
    <name evidence="1" type="primary">MDM10</name>
    <name type="ORF">BDBG_08307</name>
</gene>
<name>MDM10_BLAGS</name>
<protein>
    <recommendedName>
        <fullName evidence="1">Mitochondrial distribution and morphology protein 10</fullName>
    </recommendedName>
    <alternativeName>
        <fullName evidence="1">Mitochondrial inheritance component MDM10</fullName>
    </alternativeName>
</protein>
<dbReference type="EMBL" id="GG657470">
    <property type="protein sequence ID" value="OAT13033.1"/>
    <property type="molecule type" value="Genomic_DNA"/>
</dbReference>
<dbReference type="SMR" id="C5K0G3"/>
<dbReference type="STRING" id="559298.C5K0G3"/>
<dbReference type="VEuPathDB" id="FungiDB:BDBG_08307"/>
<dbReference type="HOGENOM" id="CLU_026505_1_0_1"/>
<dbReference type="OrthoDB" id="2103793at2759"/>
<dbReference type="Proteomes" id="UP000002038">
    <property type="component" value="Unassembled WGS sequence"/>
</dbReference>
<dbReference type="GO" id="GO:0032865">
    <property type="term" value="C:ERMES complex"/>
    <property type="evidence" value="ECO:0007669"/>
    <property type="project" value="UniProtKB-UniRule"/>
</dbReference>
<dbReference type="GO" id="GO:0001401">
    <property type="term" value="C:SAM complex"/>
    <property type="evidence" value="ECO:0007669"/>
    <property type="project" value="TreeGrafter"/>
</dbReference>
<dbReference type="GO" id="GO:0051654">
    <property type="term" value="P:establishment of mitochondrion localization"/>
    <property type="evidence" value="ECO:0007669"/>
    <property type="project" value="TreeGrafter"/>
</dbReference>
<dbReference type="GO" id="GO:0000002">
    <property type="term" value="P:mitochondrial genome maintenance"/>
    <property type="evidence" value="ECO:0007669"/>
    <property type="project" value="UniProtKB-UniRule"/>
</dbReference>
<dbReference type="GO" id="GO:0070096">
    <property type="term" value="P:mitochondrial outer membrane translocase complex assembly"/>
    <property type="evidence" value="ECO:0007669"/>
    <property type="project" value="UniProtKB-UniRule"/>
</dbReference>
<dbReference type="GO" id="GO:1990456">
    <property type="term" value="P:mitochondrion-endoplasmic reticulum membrane tethering"/>
    <property type="evidence" value="ECO:0007669"/>
    <property type="project" value="UniProtKB-UniRule"/>
</dbReference>
<dbReference type="GO" id="GO:0015914">
    <property type="term" value="P:phospholipid transport"/>
    <property type="evidence" value="ECO:0007669"/>
    <property type="project" value="TreeGrafter"/>
</dbReference>
<dbReference type="GO" id="GO:0045040">
    <property type="term" value="P:protein insertion into mitochondrial outer membrane"/>
    <property type="evidence" value="ECO:0007669"/>
    <property type="project" value="UniProtKB-UniRule"/>
</dbReference>
<dbReference type="HAMAP" id="MF_03102">
    <property type="entry name" value="Mdm10"/>
    <property type="match status" value="1"/>
</dbReference>
<dbReference type="InterPro" id="IPR027539">
    <property type="entry name" value="Mdm10"/>
</dbReference>
<dbReference type="PANTHER" id="PTHR28035">
    <property type="entry name" value="MITOCHONDRIAL DISTRIBUTION AND MORPHOLOGY PROTEIN 10"/>
    <property type="match status" value="1"/>
</dbReference>
<dbReference type="PANTHER" id="PTHR28035:SF1">
    <property type="entry name" value="MITOCHONDRIAL DISTRIBUTION AND MORPHOLOGY PROTEIN 10"/>
    <property type="match status" value="1"/>
</dbReference>
<dbReference type="Pfam" id="PF12519">
    <property type="entry name" value="MDM10"/>
    <property type="match status" value="1"/>
</dbReference>
<keyword id="KW-0472">Membrane</keyword>
<keyword id="KW-0496">Mitochondrion</keyword>
<keyword id="KW-1000">Mitochondrion outer membrane</keyword>
<keyword id="KW-1185">Reference proteome</keyword>
<keyword id="KW-0812">Transmembrane</keyword>
<keyword id="KW-1134">Transmembrane beta strand</keyword>
<proteinExistence type="inferred from homology"/>
<accession>C5K0G3</accession>
<accession>A0A179UYY1</accession>